<organism>
    <name type="scientific">Arabidopsis thaliana</name>
    <name type="common">Mouse-ear cress</name>
    <dbReference type="NCBI Taxonomy" id="3702"/>
    <lineage>
        <taxon>Eukaryota</taxon>
        <taxon>Viridiplantae</taxon>
        <taxon>Streptophyta</taxon>
        <taxon>Embryophyta</taxon>
        <taxon>Tracheophyta</taxon>
        <taxon>Spermatophyta</taxon>
        <taxon>Magnoliopsida</taxon>
        <taxon>eudicotyledons</taxon>
        <taxon>Gunneridae</taxon>
        <taxon>Pentapetalae</taxon>
        <taxon>rosids</taxon>
        <taxon>malvids</taxon>
        <taxon>Brassicales</taxon>
        <taxon>Brassicaceae</taxon>
        <taxon>Camelineae</taxon>
        <taxon>Arabidopsis</taxon>
    </lineage>
</organism>
<proteinExistence type="evidence at protein level"/>
<keyword id="KW-0472">Membrane</keyword>
<keyword id="KW-0496">Mitochondrion</keyword>
<keyword id="KW-0999">Mitochondrion inner membrane</keyword>
<keyword id="KW-1185">Reference proteome</keyword>
<keyword id="KW-0677">Repeat</keyword>
<keyword id="KW-0346">Stress response</keyword>
<keyword id="KW-0812">Transmembrane</keyword>
<keyword id="KW-1133">Transmembrane helix</keyword>
<keyword id="KW-0813">Transport</keyword>
<protein>
    <recommendedName>
        <fullName>Mitochondrial arginine transporter BAC2</fullName>
    </recommendedName>
    <alternativeName>
        <fullName>Mitochondrial basic amino acid carrier 2</fullName>
        <shortName>AtMBAC2</shortName>
    </alternativeName>
</protein>
<name>BAC2_ARATH</name>
<gene>
    <name type="primary">BAC2</name>
    <name type="ordered locus">At1g79900</name>
    <name type="ORF">F19K16.14</name>
</gene>
<feature type="chain" id="PRO_0000420759" description="Mitochondrial arginine transporter BAC2">
    <location>
        <begin position="1"/>
        <end position="296"/>
    </location>
</feature>
<feature type="transmembrane region" description="Helical; Name=1" evidence="1">
    <location>
        <begin position="16"/>
        <end position="36"/>
    </location>
</feature>
<feature type="transmembrane region" description="Helical; Name=2" evidence="1">
    <location>
        <begin position="70"/>
        <end position="90"/>
    </location>
</feature>
<feature type="transmembrane region" description="Helical; Name=3" evidence="1">
    <location>
        <begin position="110"/>
        <end position="130"/>
    </location>
</feature>
<feature type="transmembrane region" description="Helical; Name=4" evidence="1">
    <location>
        <begin position="162"/>
        <end position="181"/>
    </location>
</feature>
<feature type="transmembrane region" description="Helical; Name=5" evidence="1">
    <location>
        <begin position="204"/>
        <end position="224"/>
    </location>
</feature>
<feature type="transmembrane region" description="Helical; Name=6" evidence="1">
    <location>
        <begin position="260"/>
        <end position="280"/>
    </location>
</feature>
<feature type="repeat" description="Solcar 1">
    <location>
        <begin position="13"/>
        <end position="93"/>
    </location>
</feature>
<feature type="repeat" description="Solcar 2">
    <location>
        <begin position="104"/>
        <end position="187"/>
    </location>
</feature>
<feature type="repeat" description="Solcar 3">
    <location>
        <begin position="198"/>
        <end position="282"/>
    </location>
</feature>
<feature type="sequence conflict" description="In Ref. 5; AAM64990." evidence="6" ref="5">
    <original>R</original>
    <variation>I</variation>
    <location>
        <position position="227"/>
    </location>
</feature>
<reference key="1">
    <citation type="journal article" date="2010" name="Plant Physiol.">
        <title>Mutations in the hyperosmotic stress-responsive mitochondrial BASIC AMINO ACID CARRIER2 enhance proline accumulation in Arabidopsis.</title>
        <authorList>
            <person name="Toka I."/>
            <person name="Planchais S."/>
            <person name="Cabassa C."/>
            <person name="Justin A.M."/>
            <person name="De Vos D."/>
            <person name="Richard L."/>
            <person name="Savoure A."/>
            <person name="Carol P."/>
        </authorList>
    </citation>
    <scope>NUCLEOTIDE SEQUENCE [GENOMIC DNA]</scope>
    <scope>FUNCTION</scope>
    <scope>TISSUE SPECIFICITY</scope>
    <scope>INDUCTION</scope>
    <scope>SUBCELLULAR LOCATION</scope>
    <scope>DISRUPTION PHENOTYPE</scope>
</reference>
<reference key="2">
    <citation type="journal article" date="2000" name="Nature">
        <title>Sequence and analysis of chromosome 1 of the plant Arabidopsis thaliana.</title>
        <authorList>
            <person name="Theologis A."/>
            <person name="Ecker J.R."/>
            <person name="Palm C.J."/>
            <person name="Federspiel N.A."/>
            <person name="Kaul S."/>
            <person name="White O."/>
            <person name="Alonso J."/>
            <person name="Altafi H."/>
            <person name="Araujo R."/>
            <person name="Bowman C.L."/>
            <person name="Brooks S.Y."/>
            <person name="Buehler E."/>
            <person name="Chan A."/>
            <person name="Chao Q."/>
            <person name="Chen H."/>
            <person name="Cheuk R.F."/>
            <person name="Chin C.W."/>
            <person name="Chung M.K."/>
            <person name="Conn L."/>
            <person name="Conway A.B."/>
            <person name="Conway A.R."/>
            <person name="Creasy T.H."/>
            <person name="Dewar K."/>
            <person name="Dunn P."/>
            <person name="Etgu P."/>
            <person name="Feldblyum T.V."/>
            <person name="Feng J.-D."/>
            <person name="Fong B."/>
            <person name="Fujii C.Y."/>
            <person name="Gill J.E."/>
            <person name="Goldsmith A.D."/>
            <person name="Haas B."/>
            <person name="Hansen N.F."/>
            <person name="Hughes B."/>
            <person name="Huizar L."/>
            <person name="Hunter J.L."/>
            <person name="Jenkins J."/>
            <person name="Johnson-Hopson C."/>
            <person name="Khan S."/>
            <person name="Khaykin E."/>
            <person name="Kim C.J."/>
            <person name="Koo H.L."/>
            <person name="Kremenetskaia I."/>
            <person name="Kurtz D.B."/>
            <person name="Kwan A."/>
            <person name="Lam B."/>
            <person name="Langin-Hooper S."/>
            <person name="Lee A."/>
            <person name="Lee J.M."/>
            <person name="Lenz C.A."/>
            <person name="Li J.H."/>
            <person name="Li Y.-P."/>
            <person name="Lin X."/>
            <person name="Liu S.X."/>
            <person name="Liu Z.A."/>
            <person name="Luros J.S."/>
            <person name="Maiti R."/>
            <person name="Marziali A."/>
            <person name="Militscher J."/>
            <person name="Miranda M."/>
            <person name="Nguyen M."/>
            <person name="Nierman W.C."/>
            <person name="Osborne B.I."/>
            <person name="Pai G."/>
            <person name="Peterson J."/>
            <person name="Pham P.K."/>
            <person name="Rizzo M."/>
            <person name="Rooney T."/>
            <person name="Rowley D."/>
            <person name="Sakano H."/>
            <person name="Salzberg S.L."/>
            <person name="Schwartz J.R."/>
            <person name="Shinn P."/>
            <person name="Southwick A.M."/>
            <person name="Sun H."/>
            <person name="Tallon L.J."/>
            <person name="Tambunga G."/>
            <person name="Toriumi M.J."/>
            <person name="Town C.D."/>
            <person name="Utterback T."/>
            <person name="Van Aken S."/>
            <person name="Vaysberg M."/>
            <person name="Vysotskaia V.S."/>
            <person name="Walker M."/>
            <person name="Wu D."/>
            <person name="Yu G."/>
            <person name="Fraser C.M."/>
            <person name="Venter J.C."/>
            <person name="Davis R.W."/>
        </authorList>
    </citation>
    <scope>NUCLEOTIDE SEQUENCE [LARGE SCALE GENOMIC DNA]</scope>
    <source>
        <strain>cv. Columbia</strain>
    </source>
</reference>
<reference key="3">
    <citation type="journal article" date="2017" name="Plant J.">
        <title>Araport11: a complete reannotation of the Arabidopsis thaliana reference genome.</title>
        <authorList>
            <person name="Cheng C.Y."/>
            <person name="Krishnakumar V."/>
            <person name="Chan A.P."/>
            <person name="Thibaud-Nissen F."/>
            <person name="Schobel S."/>
            <person name="Town C.D."/>
        </authorList>
    </citation>
    <scope>GENOME REANNOTATION</scope>
    <source>
        <strain>cv. Columbia</strain>
    </source>
</reference>
<reference key="4">
    <citation type="journal article" date="2003" name="Science">
        <title>Empirical analysis of transcriptional activity in the Arabidopsis genome.</title>
        <authorList>
            <person name="Yamada K."/>
            <person name="Lim J."/>
            <person name="Dale J.M."/>
            <person name="Chen H."/>
            <person name="Shinn P."/>
            <person name="Palm C.J."/>
            <person name="Southwick A.M."/>
            <person name="Wu H.C."/>
            <person name="Kim C.J."/>
            <person name="Nguyen M."/>
            <person name="Pham P.K."/>
            <person name="Cheuk R.F."/>
            <person name="Karlin-Newmann G."/>
            <person name="Liu S.X."/>
            <person name="Lam B."/>
            <person name="Sakano H."/>
            <person name="Wu T."/>
            <person name="Yu G."/>
            <person name="Miranda M."/>
            <person name="Quach H.L."/>
            <person name="Tripp M."/>
            <person name="Chang C.H."/>
            <person name="Lee J.M."/>
            <person name="Toriumi M.J."/>
            <person name="Chan M.M."/>
            <person name="Tang C.C."/>
            <person name="Onodera C.S."/>
            <person name="Deng J.M."/>
            <person name="Akiyama K."/>
            <person name="Ansari Y."/>
            <person name="Arakawa T."/>
            <person name="Banh J."/>
            <person name="Banno F."/>
            <person name="Bowser L."/>
            <person name="Brooks S.Y."/>
            <person name="Carninci P."/>
            <person name="Chao Q."/>
            <person name="Choy N."/>
            <person name="Enju A."/>
            <person name="Goldsmith A.D."/>
            <person name="Gurjal M."/>
            <person name="Hansen N.F."/>
            <person name="Hayashizaki Y."/>
            <person name="Johnson-Hopson C."/>
            <person name="Hsuan V.W."/>
            <person name="Iida K."/>
            <person name="Karnes M."/>
            <person name="Khan S."/>
            <person name="Koesema E."/>
            <person name="Ishida J."/>
            <person name="Jiang P.X."/>
            <person name="Jones T."/>
            <person name="Kawai J."/>
            <person name="Kamiya A."/>
            <person name="Meyers C."/>
            <person name="Nakajima M."/>
            <person name="Narusaka M."/>
            <person name="Seki M."/>
            <person name="Sakurai T."/>
            <person name="Satou M."/>
            <person name="Tamse R."/>
            <person name="Vaysberg M."/>
            <person name="Wallender E.K."/>
            <person name="Wong C."/>
            <person name="Yamamura Y."/>
            <person name="Yuan S."/>
            <person name="Shinozaki K."/>
            <person name="Davis R.W."/>
            <person name="Theologis A."/>
            <person name="Ecker J.R."/>
        </authorList>
    </citation>
    <scope>NUCLEOTIDE SEQUENCE [LARGE SCALE MRNA]</scope>
    <source>
        <strain>cv. Columbia</strain>
    </source>
</reference>
<reference key="5">
    <citation type="submission" date="2002-03" db="EMBL/GenBank/DDBJ databases">
        <title>Full-length cDNA from Arabidopsis thaliana.</title>
        <authorList>
            <person name="Brover V.V."/>
            <person name="Troukhan M.E."/>
            <person name="Alexandrov N.A."/>
            <person name="Lu Y.-P."/>
            <person name="Flavell R.B."/>
            <person name="Feldmann K.A."/>
        </authorList>
    </citation>
    <scope>NUCLEOTIDE SEQUENCE [LARGE SCALE MRNA]</scope>
</reference>
<reference key="6">
    <citation type="journal article" date="2003" name="BMC Plant Biol.">
        <title>Expression pattern of a nuclear encoded mitochondrial arginine-ornithine translocator gene from Arabidopsis.</title>
        <authorList>
            <person name="Catoni E."/>
            <person name="Desimone M."/>
            <person name="Hilpert M."/>
            <person name="Wipf D."/>
            <person name="Kunze R."/>
            <person name="Schneider A."/>
            <person name="Fluegge U.I."/>
            <person name="Schumacher K."/>
            <person name="Frommer W.B."/>
        </authorList>
    </citation>
    <scope>FUNCTION</scope>
    <scope>TISSUE SPECIFICITY</scope>
</reference>
<reference key="7">
    <citation type="journal article" date="2003" name="Plant J.">
        <title>Identification of a mitochondrial transporter for basic amino acids in Arabidopsis thaliana by functional reconstitution into liposomes and complementation in yeast.</title>
        <authorList>
            <person name="Hoyos M.E."/>
            <person name="Palmieri L."/>
            <person name="Wertin T."/>
            <person name="Arrigoni R."/>
            <person name="Polacco J.C."/>
            <person name="Palmieri F."/>
        </authorList>
    </citation>
    <scope>FUNCTION</scope>
    <scope>TISSUE SPECIFICITY</scope>
</reference>
<reference key="8">
    <citation type="journal article" date="2004" name="Trends Plant Sci.">
        <title>The growing family of mitochondrial carriers in Arabidopsis.</title>
        <authorList>
            <person name="Picault N."/>
            <person name="Hodges M."/>
            <person name="Palmieri L."/>
            <person name="Palmieri F."/>
        </authorList>
    </citation>
    <scope>GENE FAMILY</scope>
</reference>
<reference key="9">
    <citation type="journal article" date="2006" name="Biochim. Biophys. Acta">
        <title>Arabidopsis mitochondria have two basic amino acid transporters with partially overlapping specificities and differential expression in seedling development.</title>
        <authorList>
            <person name="Palmieri L."/>
            <person name="Todd C.D."/>
            <person name="Arrigoni R."/>
            <person name="Hoyos M.E."/>
            <person name="Santoro A."/>
            <person name="Polacco J.C."/>
            <person name="Palmieri F."/>
        </authorList>
    </citation>
    <scope>FUNCTION</scope>
    <scope>ACTIVITY REGULATION</scope>
    <scope>BIOPHYSICOCHEMICAL PROPERTIES</scope>
</reference>
<sequence length="296" mass="32252">MDFWPEFMATSWGREFVAGGFGGVAGIISGYPLDTLRIRQQQSSKSGSAFSILRRMLAIEGPSSLYRGMAAPLASVTFQNAMVFQIYAIFSRSFDSSVPLVEPPSYRGVALGGVATGAVQSLLLTPVELIKIRLQLQQTKSGPITLAKSILRRQGLQGLYRGLTITVLRDAPAHGLYFWTYEYVRERLHPGCRKTGQENLRTMLVAGGLAGVASWVACYPLDVVKTRLQQGHGAYEGIADCFRKSVKQEGYTVLWRGLGTAVARAFVVNGAIFAAYEVALRCLFNQSPSPDIVTGD</sequence>
<dbReference type="EMBL" id="GU967412">
    <property type="protein sequence ID" value="ADE74624.1"/>
    <property type="status" value="ALT_SEQ"/>
    <property type="molecule type" value="Genomic_DNA"/>
</dbReference>
<dbReference type="EMBL" id="GU967413">
    <property type="protein sequence ID" value="ADE74625.1"/>
    <property type="status" value="ALT_SEQ"/>
    <property type="molecule type" value="Genomic_DNA"/>
</dbReference>
<dbReference type="EMBL" id="AC011717">
    <property type="protein sequence ID" value="AAG52250.1"/>
    <property type="molecule type" value="Genomic_DNA"/>
</dbReference>
<dbReference type="EMBL" id="CP002684">
    <property type="protein sequence ID" value="AEE36321.1"/>
    <property type="molecule type" value="Genomic_DNA"/>
</dbReference>
<dbReference type="EMBL" id="AY065365">
    <property type="protein sequence ID" value="AAL38806.1"/>
    <property type="molecule type" value="mRNA"/>
</dbReference>
<dbReference type="EMBL" id="AY096390">
    <property type="protein sequence ID" value="AAM20031.1"/>
    <property type="molecule type" value="mRNA"/>
</dbReference>
<dbReference type="EMBL" id="AY087444">
    <property type="protein sequence ID" value="AAM64990.1"/>
    <property type="molecule type" value="mRNA"/>
</dbReference>
<dbReference type="PIR" id="B96830">
    <property type="entry name" value="B96830"/>
</dbReference>
<dbReference type="RefSeq" id="NP_178108.1">
    <property type="nucleotide sequence ID" value="NM_106639.5"/>
</dbReference>
<dbReference type="SMR" id="Q9CA93"/>
<dbReference type="FunCoup" id="Q9CA93">
    <property type="interactions" value="120"/>
</dbReference>
<dbReference type="STRING" id="3702.Q9CA93"/>
<dbReference type="TCDB" id="2.A.29.8.13">
    <property type="family name" value="the mitochondrial carrier (mc) family"/>
</dbReference>
<dbReference type="PaxDb" id="3702-AT1G79900.1"/>
<dbReference type="ProteomicsDB" id="241120"/>
<dbReference type="EnsemblPlants" id="AT1G79900.1">
    <property type="protein sequence ID" value="AT1G79900.1"/>
    <property type="gene ID" value="AT1G79900"/>
</dbReference>
<dbReference type="GeneID" id="844329"/>
<dbReference type="Gramene" id="AT1G79900.1">
    <property type="protein sequence ID" value="AT1G79900.1"/>
    <property type="gene ID" value="AT1G79900"/>
</dbReference>
<dbReference type="KEGG" id="ath:AT1G79900"/>
<dbReference type="Araport" id="AT1G79900"/>
<dbReference type="TAIR" id="AT1G79900">
    <property type="gene designation" value="BAC2"/>
</dbReference>
<dbReference type="eggNOG" id="KOG0762">
    <property type="taxonomic scope" value="Eukaryota"/>
</dbReference>
<dbReference type="HOGENOM" id="CLU_015166_16_1_1"/>
<dbReference type="InParanoid" id="Q9CA93"/>
<dbReference type="OMA" id="VYRESGW"/>
<dbReference type="PhylomeDB" id="Q9CA93"/>
<dbReference type="BioCyc" id="ARA:AT1G79900-MONOMER"/>
<dbReference type="BioCyc" id="MetaCyc:AT1G79900-MONOMER"/>
<dbReference type="SABIO-RK" id="Q9CA93"/>
<dbReference type="PRO" id="PR:Q9CA93"/>
<dbReference type="Proteomes" id="UP000006548">
    <property type="component" value="Chromosome 1"/>
</dbReference>
<dbReference type="ExpressionAtlas" id="Q9CA93">
    <property type="expression patterns" value="baseline and differential"/>
</dbReference>
<dbReference type="GO" id="GO:0005743">
    <property type="term" value="C:mitochondrial inner membrane"/>
    <property type="evidence" value="ECO:0007669"/>
    <property type="project" value="UniProtKB-SubCell"/>
</dbReference>
<dbReference type="GO" id="GO:0005739">
    <property type="term" value="C:mitochondrion"/>
    <property type="evidence" value="ECO:0000314"/>
    <property type="project" value="TAIR"/>
</dbReference>
<dbReference type="GO" id="GO:0061459">
    <property type="term" value="F:L-arginine transmembrane transporter activity"/>
    <property type="evidence" value="ECO:0000314"/>
    <property type="project" value="UniProtKB"/>
</dbReference>
<dbReference type="GO" id="GO:0005290">
    <property type="term" value="F:L-histidine transmembrane transporter activity"/>
    <property type="evidence" value="ECO:0000314"/>
    <property type="project" value="UniProtKB"/>
</dbReference>
<dbReference type="GO" id="GO:0015189">
    <property type="term" value="F:L-lysine transmembrane transporter activity"/>
    <property type="evidence" value="ECO:0000314"/>
    <property type="project" value="UniProtKB"/>
</dbReference>
<dbReference type="GO" id="GO:0000064">
    <property type="term" value="F:L-ornithine transmembrane transporter activity"/>
    <property type="evidence" value="ECO:0000314"/>
    <property type="project" value="UniProtKB"/>
</dbReference>
<dbReference type="GO" id="GO:0006972">
    <property type="term" value="P:hyperosmotic response"/>
    <property type="evidence" value="ECO:0000270"/>
    <property type="project" value="TAIR"/>
</dbReference>
<dbReference type="GO" id="GO:0006561">
    <property type="term" value="P:proline biosynthetic process"/>
    <property type="evidence" value="ECO:0000315"/>
    <property type="project" value="TAIR"/>
</dbReference>
<dbReference type="FunFam" id="1.50.40.10:FF:000115">
    <property type="entry name" value="Mitochondrial arginine transporter BAC2"/>
    <property type="match status" value="1"/>
</dbReference>
<dbReference type="Gene3D" id="1.50.40.10">
    <property type="entry name" value="Mitochondrial carrier domain"/>
    <property type="match status" value="1"/>
</dbReference>
<dbReference type="InterPro" id="IPR002067">
    <property type="entry name" value="Mit_carrier"/>
</dbReference>
<dbReference type="InterPro" id="IPR050567">
    <property type="entry name" value="Mitochondrial_Carrier"/>
</dbReference>
<dbReference type="InterPro" id="IPR018108">
    <property type="entry name" value="Mitochondrial_sb/sol_carrier"/>
</dbReference>
<dbReference type="InterPro" id="IPR023395">
    <property type="entry name" value="Mt_carrier_dom_sf"/>
</dbReference>
<dbReference type="PANTHER" id="PTHR45624">
    <property type="entry name" value="MITOCHONDRIAL BASIC AMINO ACIDS TRANSPORTER-RELATED"/>
    <property type="match status" value="1"/>
</dbReference>
<dbReference type="PANTHER" id="PTHR45624:SF10">
    <property type="entry name" value="SLC (SOLUTE CARRIER) HOMOLOG"/>
    <property type="match status" value="1"/>
</dbReference>
<dbReference type="Pfam" id="PF00153">
    <property type="entry name" value="Mito_carr"/>
    <property type="match status" value="3"/>
</dbReference>
<dbReference type="PRINTS" id="PR00926">
    <property type="entry name" value="MITOCARRIER"/>
</dbReference>
<dbReference type="SUPFAM" id="SSF103506">
    <property type="entry name" value="Mitochondrial carrier"/>
    <property type="match status" value="1"/>
</dbReference>
<dbReference type="PROSITE" id="PS50920">
    <property type="entry name" value="SOLCAR"/>
    <property type="match status" value="3"/>
</dbReference>
<evidence type="ECO:0000255" key="1"/>
<evidence type="ECO:0000269" key="2">
    <source>
    </source>
</evidence>
<evidence type="ECO:0000269" key="3">
    <source>
    </source>
</evidence>
<evidence type="ECO:0000269" key="4">
    <source>
    </source>
</evidence>
<evidence type="ECO:0000269" key="5">
    <source>
    </source>
</evidence>
<evidence type="ECO:0000305" key="6"/>
<evidence type="ECO:0000305" key="7">
    <source>
    </source>
</evidence>
<comment type="function">
    <text evidence="2 3 4 5">Mitochondrial arginine transporter that catalyzes the counter-exchange of arginine with lysine, ornithine, arginine, histidine and citrulline. Substrate preference in reconstituted proteoliposomes is arginine &gt; homoarginine &gt; citrulline &gt; histidine &gt; lysine &gt; ornithine. May be involved in the delivery of arginine, released from seed reserves, to mitochondrial arginase and the export of ornithine. May contribute to proline accumulation in response to hyperosmotic stress.</text>
</comment>
<comment type="activity regulation">
    <text evidence="4">Inhibited by mercuric chloride.</text>
</comment>
<comment type="biophysicochemical properties">
    <kinetics>
        <KM evidence="4">0.16 mM for arginine (for the recombinant protein in reconstituted proteoliposomes)</KM>
        <Vmax evidence="4">38.0 umol/min/g enzyme toward arginine (for the recombinant protein in reconstituted proteoliposomes)</Vmax>
    </kinetics>
    <phDependence>
        <text evidence="4">Optimum pH is 8.0.</text>
    </phDependence>
</comment>
<comment type="subcellular location">
    <subcellularLocation>
        <location evidence="7">Mitochondrion inner membrane</location>
        <topology evidence="7">Multi-pass membrane protein</topology>
    </subcellularLocation>
</comment>
<comment type="tissue specificity">
    <text evidence="2 3 5">High expression in flowers, stamens, petals and pollen. Expressed in roots, leaves and stems.</text>
</comment>
<comment type="induction">
    <text evidence="5">By hyperosmotic stress and dark-induced senescence.</text>
</comment>
<comment type="disruption phenotype">
    <text evidence="5">No visible phenotype under normal growth conditions.</text>
</comment>
<comment type="similarity">
    <text evidence="6">Belongs to the mitochondrial carrier (TC 2.A.29) family.</text>
</comment>
<comment type="sequence caution" evidence="6">
    <conflict type="erroneous gene model prediction">
        <sequence resource="EMBL-CDS" id="ADE74624"/>
    </conflict>
</comment>
<comment type="sequence caution" evidence="6">
    <conflict type="erroneous gene model prediction">
        <sequence resource="EMBL-CDS" id="ADE74625"/>
    </conflict>
</comment>
<accession>Q9CA93</accession>
<accession>D5LRV2</accession>
<accession>D5LRV3</accession>
<accession>Q8LB35</accession>